<evidence type="ECO:0000255" key="1">
    <source>
        <dbReference type="HAMAP-Rule" id="MF_00537"/>
    </source>
</evidence>
<evidence type="ECO:0000256" key="2">
    <source>
        <dbReference type="SAM" id="MobiDB-lite"/>
    </source>
</evidence>
<evidence type="ECO:0000305" key="3"/>
<name>RS14_ACICJ</name>
<reference key="1">
    <citation type="submission" date="2007-05" db="EMBL/GenBank/DDBJ databases">
        <title>Complete sequence of chromosome of Acidiphilium cryptum JF-5.</title>
        <authorList>
            <consortium name="US DOE Joint Genome Institute"/>
            <person name="Copeland A."/>
            <person name="Lucas S."/>
            <person name="Lapidus A."/>
            <person name="Barry K."/>
            <person name="Detter J.C."/>
            <person name="Glavina del Rio T."/>
            <person name="Hammon N."/>
            <person name="Israni S."/>
            <person name="Dalin E."/>
            <person name="Tice H."/>
            <person name="Pitluck S."/>
            <person name="Sims D."/>
            <person name="Brettin T."/>
            <person name="Bruce D."/>
            <person name="Han C."/>
            <person name="Schmutz J."/>
            <person name="Larimer F."/>
            <person name="Land M."/>
            <person name="Hauser L."/>
            <person name="Kyrpides N."/>
            <person name="Kim E."/>
            <person name="Magnuson T."/>
            <person name="Richardson P."/>
        </authorList>
    </citation>
    <scope>NUCLEOTIDE SEQUENCE [LARGE SCALE GENOMIC DNA]</scope>
    <source>
        <strain>JF-5</strain>
    </source>
</reference>
<dbReference type="EMBL" id="CP000697">
    <property type="protein sequence ID" value="ABQ31134.1"/>
    <property type="molecule type" value="Genomic_DNA"/>
</dbReference>
<dbReference type="RefSeq" id="WP_007424186.1">
    <property type="nucleotide sequence ID" value="NC_009484.1"/>
</dbReference>
<dbReference type="SMR" id="A5FZV2"/>
<dbReference type="STRING" id="349163.Acry_1933"/>
<dbReference type="KEGG" id="acr:Acry_1933"/>
<dbReference type="eggNOG" id="COG0199">
    <property type="taxonomic scope" value="Bacteria"/>
</dbReference>
<dbReference type="HOGENOM" id="CLU_139869_0_1_5"/>
<dbReference type="Proteomes" id="UP000000245">
    <property type="component" value="Chromosome"/>
</dbReference>
<dbReference type="GO" id="GO:0005737">
    <property type="term" value="C:cytoplasm"/>
    <property type="evidence" value="ECO:0007669"/>
    <property type="project" value="UniProtKB-ARBA"/>
</dbReference>
<dbReference type="GO" id="GO:0015935">
    <property type="term" value="C:small ribosomal subunit"/>
    <property type="evidence" value="ECO:0007669"/>
    <property type="project" value="TreeGrafter"/>
</dbReference>
<dbReference type="GO" id="GO:0019843">
    <property type="term" value="F:rRNA binding"/>
    <property type="evidence" value="ECO:0007669"/>
    <property type="project" value="UniProtKB-UniRule"/>
</dbReference>
<dbReference type="GO" id="GO:0003735">
    <property type="term" value="F:structural constituent of ribosome"/>
    <property type="evidence" value="ECO:0007669"/>
    <property type="project" value="InterPro"/>
</dbReference>
<dbReference type="GO" id="GO:0006412">
    <property type="term" value="P:translation"/>
    <property type="evidence" value="ECO:0007669"/>
    <property type="project" value="UniProtKB-UniRule"/>
</dbReference>
<dbReference type="FunFam" id="1.10.287.1480:FF:000001">
    <property type="entry name" value="30S ribosomal protein S14"/>
    <property type="match status" value="1"/>
</dbReference>
<dbReference type="Gene3D" id="1.10.287.1480">
    <property type="match status" value="1"/>
</dbReference>
<dbReference type="HAMAP" id="MF_00537">
    <property type="entry name" value="Ribosomal_uS14_1"/>
    <property type="match status" value="1"/>
</dbReference>
<dbReference type="InterPro" id="IPR001209">
    <property type="entry name" value="Ribosomal_uS14"/>
</dbReference>
<dbReference type="InterPro" id="IPR023036">
    <property type="entry name" value="Ribosomal_uS14_bac/plastid"/>
</dbReference>
<dbReference type="InterPro" id="IPR018271">
    <property type="entry name" value="Ribosomal_uS14_CS"/>
</dbReference>
<dbReference type="NCBIfam" id="NF006477">
    <property type="entry name" value="PRK08881.1"/>
    <property type="match status" value="1"/>
</dbReference>
<dbReference type="PANTHER" id="PTHR19836">
    <property type="entry name" value="30S RIBOSOMAL PROTEIN S14"/>
    <property type="match status" value="1"/>
</dbReference>
<dbReference type="PANTHER" id="PTHR19836:SF19">
    <property type="entry name" value="SMALL RIBOSOMAL SUBUNIT PROTEIN US14M"/>
    <property type="match status" value="1"/>
</dbReference>
<dbReference type="Pfam" id="PF00253">
    <property type="entry name" value="Ribosomal_S14"/>
    <property type="match status" value="1"/>
</dbReference>
<dbReference type="SUPFAM" id="SSF57716">
    <property type="entry name" value="Glucocorticoid receptor-like (DNA-binding domain)"/>
    <property type="match status" value="1"/>
</dbReference>
<dbReference type="PROSITE" id="PS00527">
    <property type="entry name" value="RIBOSOMAL_S14"/>
    <property type="match status" value="1"/>
</dbReference>
<keyword id="KW-1185">Reference proteome</keyword>
<keyword id="KW-0687">Ribonucleoprotein</keyword>
<keyword id="KW-0689">Ribosomal protein</keyword>
<keyword id="KW-0694">RNA-binding</keyword>
<keyword id="KW-0699">rRNA-binding</keyword>
<comment type="function">
    <text evidence="1">Binds 16S rRNA, required for the assembly of 30S particles and may also be responsible for determining the conformation of the 16S rRNA at the A site.</text>
</comment>
<comment type="subunit">
    <text evidence="1">Part of the 30S ribosomal subunit. Contacts proteins S3 and S10.</text>
</comment>
<comment type="similarity">
    <text evidence="1">Belongs to the universal ribosomal protein uS14 family.</text>
</comment>
<protein>
    <recommendedName>
        <fullName evidence="1">Small ribosomal subunit protein uS14</fullName>
    </recommendedName>
    <alternativeName>
        <fullName evidence="3">30S ribosomal protein S14</fullName>
    </alternativeName>
</protein>
<proteinExistence type="inferred from homology"/>
<gene>
    <name evidence="1" type="primary">rpsN</name>
    <name type="ordered locus">Acry_1933</name>
</gene>
<sequence>MAKTSQVNRNKRREKMAARDAAKRAALKAIVNDRSLPVEDRFDATLKLAQLPRNGAKTRVRLRCELTGRARGNYRKFKLCRVALRDLASAGQIPGMVKSSW</sequence>
<organism>
    <name type="scientific">Acidiphilium cryptum (strain JF-5)</name>
    <dbReference type="NCBI Taxonomy" id="349163"/>
    <lineage>
        <taxon>Bacteria</taxon>
        <taxon>Pseudomonadati</taxon>
        <taxon>Pseudomonadota</taxon>
        <taxon>Alphaproteobacteria</taxon>
        <taxon>Acetobacterales</taxon>
        <taxon>Acidocellaceae</taxon>
        <taxon>Acidiphilium</taxon>
    </lineage>
</organism>
<accession>A5FZV2</accession>
<feature type="chain" id="PRO_1000128280" description="Small ribosomal subunit protein uS14">
    <location>
        <begin position="1"/>
        <end position="101"/>
    </location>
</feature>
<feature type="region of interest" description="Disordered" evidence="2">
    <location>
        <begin position="1"/>
        <end position="20"/>
    </location>
</feature>